<accession>O83748</accession>
<proteinExistence type="inferred from homology"/>
<keyword id="KW-0963">Cytoplasm</keyword>
<keyword id="KW-0251">Elongation factor</keyword>
<keyword id="KW-0342">GTP-binding</keyword>
<keyword id="KW-0547">Nucleotide-binding</keyword>
<keyword id="KW-0648">Protein biosynthesis</keyword>
<keyword id="KW-1185">Reference proteome</keyword>
<dbReference type="EMBL" id="AE000520">
    <property type="protein sequence ID" value="AAC65735.1"/>
    <property type="molecule type" value="Genomic_DNA"/>
</dbReference>
<dbReference type="PIR" id="D71283">
    <property type="entry name" value="D71283"/>
</dbReference>
<dbReference type="RefSeq" id="WP_010882212.1">
    <property type="nucleotide sequence ID" value="NC_021490.2"/>
</dbReference>
<dbReference type="SMR" id="O83748"/>
<dbReference type="STRING" id="243276.TP_0767"/>
<dbReference type="EnsemblBacteria" id="AAC65735">
    <property type="protein sequence ID" value="AAC65735"/>
    <property type="gene ID" value="TP_0767"/>
</dbReference>
<dbReference type="GeneID" id="93876533"/>
<dbReference type="KEGG" id="tpa:TP_0767"/>
<dbReference type="KEGG" id="tpw:TPANIC_0767"/>
<dbReference type="eggNOG" id="COG0480">
    <property type="taxonomic scope" value="Bacteria"/>
</dbReference>
<dbReference type="HOGENOM" id="CLU_002794_4_0_12"/>
<dbReference type="OrthoDB" id="9804431at2"/>
<dbReference type="Proteomes" id="UP000000811">
    <property type="component" value="Chromosome"/>
</dbReference>
<dbReference type="GO" id="GO:0005737">
    <property type="term" value="C:cytoplasm"/>
    <property type="evidence" value="ECO:0007669"/>
    <property type="project" value="UniProtKB-SubCell"/>
</dbReference>
<dbReference type="GO" id="GO:0005525">
    <property type="term" value="F:GTP binding"/>
    <property type="evidence" value="ECO:0007669"/>
    <property type="project" value="UniProtKB-UniRule"/>
</dbReference>
<dbReference type="GO" id="GO:0003924">
    <property type="term" value="F:GTPase activity"/>
    <property type="evidence" value="ECO:0007669"/>
    <property type="project" value="InterPro"/>
</dbReference>
<dbReference type="GO" id="GO:0003746">
    <property type="term" value="F:translation elongation factor activity"/>
    <property type="evidence" value="ECO:0007669"/>
    <property type="project" value="UniProtKB-UniRule"/>
</dbReference>
<dbReference type="CDD" id="cd01886">
    <property type="entry name" value="EF-G"/>
    <property type="match status" value="1"/>
</dbReference>
<dbReference type="CDD" id="cd16262">
    <property type="entry name" value="EFG_III"/>
    <property type="match status" value="1"/>
</dbReference>
<dbReference type="CDD" id="cd01434">
    <property type="entry name" value="EFG_mtEFG1_IV"/>
    <property type="match status" value="1"/>
</dbReference>
<dbReference type="CDD" id="cd04091">
    <property type="entry name" value="mtEFG1_II_like"/>
    <property type="match status" value="1"/>
</dbReference>
<dbReference type="FunFam" id="3.30.230.10:FF:000003">
    <property type="entry name" value="Elongation factor G"/>
    <property type="match status" value="1"/>
</dbReference>
<dbReference type="FunFam" id="3.30.70.240:FF:000001">
    <property type="entry name" value="Elongation factor G"/>
    <property type="match status" value="1"/>
</dbReference>
<dbReference type="FunFam" id="3.30.70.870:FF:000001">
    <property type="entry name" value="Elongation factor G"/>
    <property type="match status" value="1"/>
</dbReference>
<dbReference type="FunFam" id="3.40.50.300:FF:000029">
    <property type="entry name" value="Elongation factor G"/>
    <property type="match status" value="1"/>
</dbReference>
<dbReference type="FunFam" id="2.40.30.10:FF:000022">
    <property type="entry name" value="Elongation factor G, mitochondrial"/>
    <property type="match status" value="1"/>
</dbReference>
<dbReference type="Gene3D" id="3.30.230.10">
    <property type="match status" value="1"/>
</dbReference>
<dbReference type="Gene3D" id="3.30.70.240">
    <property type="match status" value="1"/>
</dbReference>
<dbReference type="Gene3D" id="3.30.70.870">
    <property type="entry name" value="Elongation Factor G (Translational Gtpase), domain 3"/>
    <property type="match status" value="1"/>
</dbReference>
<dbReference type="Gene3D" id="3.40.50.300">
    <property type="entry name" value="P-loop containing nucleotide triphosphate hydrolases"/>
    <property type="match status" value="1"/>
</dbReference>
<dbReference type="Gene3D" id="2.40.30.10">
    <property type="entry name" value="Translation factors"/>
    <property type="match status" value="1"/>
</dbReference>
<dbReference type="HAMAP" id="MF_00054_B">
    <property type="entry name" value="EF_G_EF_2_B"/>
    <property type="match status" value="1"/>
</dbReference>
<dbReference type="InterPro" id="IPR041095">
    <property type="entry name" value="EFG_II"/>
</dbReference>
<dbReference type="InterPro" id="IPR009022">
    <property type="entry name" value="EFG_III"/>
</dbReference>
<dbReference type="InterPro" id="IPR035647">
    <property type="entry name" value="EFG_III/V"/>
</dbReference>
<dbReference type="InterPro" id="IPR047872">
    <property type="entry name" value="EFG_IV"/>
</dbReference>
<dbReference type="InterPro" id="IPR000640">
    <property type="entry name" value="EFG_V-like"/>
</dbReference>
<dbReference type="InterPro" id="IPR004161">
    <property type="entry name" value="EFTu-like_2"/>
</dbReference>
<dbReference type="InterPro" id="IPR031157">
    <property type="entry name" value="G_TR_CS"/>
</dbReference>
<dbReference type="InterPro" id="IPR027417">
    <property type="entry name" value="P-loop_NTPase"/>
</dbReference>
<dbReference type="InterPro" id="IPR020568">
    <property type="entry name" value="Ribosomal_Su5_D2-typ_SF"/>
</dbReference>
<dbReference type="InterPro" id="IPR014721">
    <property type="entry name" value="Ribsml_uS5_D2-typ_fold_subgr"/>
</dbReference>
<dbReference type="InterPro" id="IPR005225">
    <property type="entry name" value="Small_GTP-bd"/>
</dbReference>
<dbReference type="InterPro" id="IPR000795">
    <property type="entry name" value="T_Tr_GTP-bd_dom"/>
</dbReference>
<dbReference type="InterPro" id="IPR009000">
    <property type="entry name" value="Transl_B-barrel_sf"/>
</dbReference>
<dbReference type="InterPro" id="IPR004540">
    <property type="entry name" value="Transl_elong_EFG/EF2"/>
</dbReference>
<dbReference type="InterPro" id="IPR005517">
    <property type="entry name" value="Transl_elong_EFG/EF2_IV"/>
</dbReference>
<dbReference type="NCBIfam" id="TIGR00484">
    <property type="entry name" value="EF-G"/>
    <property type="match status" value="1"/>
</dbReference>
<dbReference type="NCBIfam" id="NF009381">
    <property type="entry name" value="PRK12740.1-5"/>
    <property type="match status" value="1"/>
</dbReference>
<dbReference type="NCBIfam" id="TIGR00231">
    <property type="entry name" value="small_GTP"/>
    <property type="match status" value="1"/>
</dbReference>
<dbReference type="PANTHER" id="PTHR43636">
    <property type="entry name" value="ELONGATION FACTOR G, MITOCHONDRIAL"/>
    <property type="match status" value="1"/>
</dbReference>
<dbReference type="PANTHER" id="PTHR43636:SF2">
    <property type="entry name" value="ELONGATION FACTOR G, MITOCHONDRIAL"/>
    <property type="match status" value="1"/>
</dbReference>
<dbReference type="Pfam" id="PF00679">
    <property type="entry name" value="EFG_C"/>
    <property type="match status" value="1"/>
</dbReference>
<dbReference type="Pfam" id="PF14492">
    <property type="entry name" value="EFG_III"/>
    <property type="match status" value="1"/>
</dbReference>
<dbReference type="Pfam" id="PF03764">
    <property type="entry name" value="EFG_IV"/>
    <property type="match status" value="1"/>
</dbReference>
<dbReference type="Pfam" id="PF00009">
    <property type="entry name" value="GTP_EFTU"/>
    <property type="match status" value="1"/>
</dbReference>
<dbReference type="Pfam" id="PF03144">
    <property type="entry name" value="GTP_EFTU_D2"/>
    <property type="match status" value="1"/>
</dbReference>
<dbReference type="PRINTS" id="PR00315">
    <property type="entry name" value="ELONGATNFCT"/>
</dbReference>
<dbReference type="SMART" id="SM00838">
    <property type="entry name" value="EFG_C"/>
    <property type="match status" value="1"/>
</dbReference>
<dbReference type="SMART" id="SM00889">
    <property type="entry name" value="EFG_IV"/>
    <property type="match status" value="1"/>
</dbReference>
<dbReference type="SUPFAM" id="SSF54980">
    <property type="entry name" value="EF-G C-terminal domain-like"/>
    <property type="match status" value="2"/>
</dbReference>
<dbReference type="SUPFAM" id="SSF52540">
    <property type="entry name" value="P-loop containing nucleoside triphosphate hydrolases"/>
    <property type="match status" value="1"/>
</dbReference>
<dbReference type="SUPFAM" id="SSF54211">
    <property type="entry name" value="Ribosomal protein S5 domain 2-like"/>
    <property type="match status" value="1"/>
</dbReference>
<dbReference type="SUPFAM" id="SSF50447">
    <property type="entry name" value="Translation proteins"/>
    <property type="match status" value="1"/>
</dbReference>
<dbReference type="PROSITE" id="PS00301">
    <property type="entry name" value="G_TR_1"/>
    <property type="match status" value="1"/>
</dbReference>
<dbReference type="PROSITE" id="PS51722">
    <property type="entry name" value="G_TR_2"/>
    <property type="match status" value="1"/>
</dbReference>
<reference key="1">
    <citation type="journal article" date="1998" name="Science">
        <title>Complete genome sequence of Treponema pallidum, the syphilis spirochete.</title>
        <authorList>
            <person name="Fraser C.M."/>
            <person name="Norris S.J."/>
            <person name="Weinstock G.M."/>
            <person name="White O."/>
            <person name="Sutton G.G."/>
            <person name="Dodson R.J."/>
            <person name="Gwinn M.L."/>
            <person name="Hickey E.K."/>
            <person name="Clayton R.A."/>
            <person name="Ketchum K.A."/>
            <person name="Sodergren E."/>
            <person name="Hardham J.M."/>
            <person name="McLeod M.P."/>
            <person name="Salzberg S.L."/>
            <person name="Peterson J.D."/>
            <person name="Khalak H.G."/>
            <person name="Richardson D.L."/>
            <person name="Howell J.K."/>
            <person name="Chidambaram M."/>
            <person name="Utterback T.R."/>
            <person name="McDonald L.A."/>
            <person name="Artiach P."/>
            <person name="Bowman C."/>
            <person name="Cotton M.D."/>
            <person name="Fujii C."/>
            <person name="Garland S.A."/>
            <person name="Hatch B."/>
            <person name="Horst K."/>
            <person name="Roberts K.M."/>
            <person name="Sandusky M."/>
            <person name="Weidman J.F."/>
            <person name="Smith H.O."/>
            <person name="Venter J.C."/>
        </authorList>
    </citation>
    <scope>NUCLEOTIDE SEQUENCE [LARGE SCALE GENOMIC DNA]</scope>
    <source>
        <strain>Nichols</strain>
    </source>
</reference>
<feature type="chain" id="PRO_0000091254" description="Elongation factor G 1">
    <location>
        <begin position="1"/>
        <end position="695"/>
    </location>
</feature>
<feature type="domain" description="tr-type G">
    <location>
        <begin position="6"/>
        <end position="282"/>
    </location>
</feature>
<feature type="binding site" evidence="1">
    <location>
        <begin position="15"/>
        <end position="22"/>
    </location>
    <ligand>
        <name>GTP</name>
        <dbReference type="ChEBI" id="CHEBI:37565"/>
    </ligand>
</feature>
<feature type="binding site" evidence="1">
    <location>
        <begin position="82"/>
        <end position="86"/>
    </location>
    <ligand>
        <name>GTP</name>
        <dbReference type="ChEBI" id="CHEBI:37565"/>
    </ligand>
</feature>
<feature type="binding site" evidence="1">
    <location>
        <begin position="136"/>
        <end position="139"/>
    </location>
    <ligand>
        <name>GTP</name>
        <dbReference type="ChEBI" id="CHEBI:37565"/>
    </ligand>
</feature>
<name>EFG1_TREPA</name>
<sequence>MSRGISTFRNIGISAHIDSGKTTLSERILFYCDRIHAIHEVRGKDGVGATMDNMELERERGITIQSASTQVQWKGHTINVIDTPGHVDFTIEVERSLRVLDGAVLVLCSVAGVQSQSITVDRQLRRYHVPRISFINKCDRTGANPFKVCAQLREKLSLNAHLMQLPIGLEDRLEGVIDLISLKALYFEGESGAHVREAPIPEQYQADVKKYRDELIDAASLFSDELAEAYLEGTETDQLIRAAVRAGTIAEKFVPVFCGSAYKNKGIQPLLDAITYYLPDPTEVTNTALDLDRAEEPVTLSTDADAPVVALGFKLEDGKYGQLTYVRVYQGTIKKGAELFNVRARKKFKVGRLVRMNSNQMEDISEGTPGDIVALFGVDCASGDTFCSGDLNYAMTSMFVPEPVISLSITPKDKRSADQVSKALNRFTKEDPTFRSFVDPESNQTIIQGMGELHLDVYIERMRREYKCEVETGMPQVAYREAISARADFNYTHKKQTGGSGQFGRVAGFIEPIAGQDYEFVDQIKGGVIPNEFIPSCDKGFRTAVKKGTLIGFPIVGVRVTINDGQSHPVDSSDMAFQAAAIGAFREAYNGAKPVVLEPIMRVSVEGPQEFQGSVFGLINQRRGVVVSSADDEQFSRVDAEVPLSEMFGFSTVLRSSTQGKAEYSMEFAKYGKAPQGVTDSLIKEYQEKRKAEQR</sequence>
<organism>
    <name type="scientific">Treponema pallidum (strain Nichols)</name>
    <dbReference type="NCBI Taxonomy" id="243276"/>
    <lineage>
        <taxon>Bacteria</taxon>
        <taxon>Pseudomonadati</taxon>
        <taxon>Spirochaetota</taxon>
        <taxon>Spirochaetia</taxon>
        <taxon>Spirochaetales</taxon>
        <taxon>Treponemataceae</taxon>
        <taxon>Treponema</taxon>
    </lineage>
</organism>
<gene>
    <name type="primary">fusA</name>
    <name type="synonym">fusA-2</name>
    <name type="ordered locus">TP_0767</name>
</gene>
<protein>
    <recommendedName>
        <fullName>Elongation factor G 1</fullName>
        <shortName>EF-G 1</shortName>
    </recommendedName>
</protein>
<evidence type="ECO:0000250" key="1"/>
<evidence type="ECO:0000305" key="2"/>
<comment type="function">
    <text evidence="1">Catalyzes the GTP-dependent ribosomal translocation step during translation elongation. During this step, the ribosome changes from the pre-translocational (PRE) to the post-translocational (POST) state as the newly formed A-site-bound peptidyl-tRNA and P-site-bound deacylated tRNA move to the P and E sites, respectively. Catalyzes the coordinated movement of the two tRNA molecules, the mRNA and conformational changes in the ribosome (By similarity).</text>
</comment>
<comment type="subcellular location">
    <subcellularLocation>
        <location evidence="1">Cytoplasm</location>
    </subcellularLocation>
</comment>
<comment type="similarity">
    <text evidence="2">Belongs to the TRAFAC class translation factor GTPase superfamily. Classic translation factor GTPase family. EF-G/EF-2 subfamily.</text>
</comment>